<organism>
    <name type="scientific">Caulobacter vibrioides (strain ATCC 19089 / CIP 103742 / CB 15)</name>
    <name type="common">Caulobacter crescentus</name>
    <dbReference type="NCBI Taxonomy" id="190650"/>
    <lineage>
        <taxon>Bacteria</taxon>
        <taxon>Pseudomonadati</taxon>
        <taxon>Pseudomonadota</taxon>
        <taxon>Alphaproteobacteria</taxon>
        <taxon>Caulobacterales</taxon>
        <taxon>Caulobacteraceae</taxon>
        <taxon>Caulobacter</taxon>
    </lineage>
</organism>
<reference key="1">
    <citation type="journal article" date="2001" name="Proc. Natl. Acad. Sci. U.S.A.">
        <title>Complete genome sequence of Caulobacter crescentus.</title>
        <authorList>
            <person name="Nierman W.C."/>
            <person name="Feldblyum T.V."/>
            <person name="Laub M.T."/>
            <person name="Paulsen I.T."/>
            <person name="Nelson K.E."/>
            <person name="Eisen J.A."/>
            <person name="Heidelberg J.F."/>
            <person name="Alley M.R.K."/>
            <person name="Ohta N."/>
            <person name="Maddock J.R."/>
            <person name="Potocka I."/>
            <person name="Nelson W.C."/>
            <person name="Newton A."/>
            <person name="Stephens C."/>
            <person name="Phadke N.D."/>
            <person name="Ely B."/>
            <person name="DeBoy R.T."/>
            <person name="Dodson R.J."/>
            <person name="Durkin A.S."/>
            <person name="Gwinn M.L."/>
            <person name="Haft D.H."/>
            <person name="Kolonay J.F."/>
            <person name="Smit J."/>
            <person name="Craven M.B."/>
            <person name="Khouri H.M."/>
            <person name="Shetty J."/>
            <person name="Berry K.J."/>
            <person name="Utterback T.R."/>
            <person name="Tran K."/>
            <person name="Wolf A.M."/>
            <person name="Vamathevan J.J."/>
            <person name="Ermolaeva M.D."/>
            <person name="White O."/>
            <person name="Salzberg S.L."/>
            <person name="Venter J.C."/>
            <person name="Shapiro L."/>
            <person name="Fraser C.M."/>
        </authorList>
    </citation>
    <scope>NUCLEOTIDE SEQUENCE [LARGE SCALE GENOMIC DNA]</scope>
    <source>
        <strain>ATCC 19089 / CIP 103742 / CB 15</strain>
    </source>
</reference>
<name>NHAA_CAUVC</name>
<sequence length="413" mass="43454">MLQRVRKLSLLRELLESGAAGGLLLMACAVLALFVANSPLAEGYFHALHVPFAGLDLLHWINDGLMAIFFLFVGLEIKREFLDGQLSTWANRALPCIAAAGGVVVPGLIYASLNAGSPETLRGWAIPTATDIAFALGVLSLLGSRVPTSLKIFLATLAIVDDLVAVLIIAVFYTAELNTAALMGAALVTLVLLGFNRLKVKRLAPYLVMGVALWWLVLLSGVHATIAGVVLAMTIPLHASKAAPDDATSPLHRLEHALSPWVAFLVVPIFGFANAGLSFAGMTPSVLAEPVTLGVALGLFFGKQIGVFGAAWLAIRLGVARLPVAASWAQLYGVSLLCGIGFTMSLFIGLLAFRDAALQNEVKVGVLVGSLSSALIGATLLSLTKRRLPAVDPSRDHQADATALDDLGREDAR</sequence>
<proteinExistence type="inferred from homology"/>
<protein>
    <recommendedName>
        <fullName evidence="1">Na(+)/H(+) antiporter NhaA</fullName>
    </recommendedName>
    <alternativeName>
        <fullName evidence="1">Sodium/proton antiporter NhaA</fullName>
    </alternativeName>
</protein>
<gene>
    <name evidence="1" type="primary">nhaA</name>
    <name type="ordered locus">CC_0450</name>
</gene>
<feature type="chain" id="PRO_0000334265" description="Na(+)/H(+) antiporter NhaA">
    <location>
        <begin position="1"/>
        <end position="413"/>
    </location>
</feature>
<feature type="transmembrane region" description="Helical" evidence="1">
    <location>
        <begin position="15"/>
        <end position="35"/>
    </location>
</feature>
<feature type="transmembrane region" description="Helical" evidence="1">
    <location>
        <begin position="57"/>
        <end position="77"/>
    </location>
</feature>
<feature type="transmembrane region" description="Helical" evidence="1">
    <location>
        <begin position="93"/>
        <end position="113"/>
    </location>
</feature>
<feature type="transmembrane region" description="Helical" evidence="1">
    <location>
        <begin position="123"/>
        <end position="143"/>
    </location>
</feature>
<feature type="transmembrane region" description="Helical" evidence="1">
    <location>
        <begin position="152"/>
        <end position="172"/>
    </location>
</feature>
<feature type="transmembrane region" description="Helical" evidence="1">
    <location>
        <begin position="175"/>
        <end position="195"/>
    </location>
</feature>
<feature type="transmembrane region" description="Helical" evidence="1">
    <location>
        <begin position="211"/>
        <end position="231"/>
    </location>
</feature>
<feature type="transmembrane region" description="Helical" evidence="1">
    <location>
        <begin position="261"/>
        <end position="281"/>
    </location>
</feature>
<feature type="transmembrane region" description="Helical" evidence="1">
    <location>
        <begin position="295"/>
        <end position="315"/>
    </location>
</feature>
<feature type="transmembrane region" description="Helical" evidence="1">
    <location>
        <begin position="333"/>
        <end position="353"/>
    </location>
</feature>
<feature type="transmembrane region" description="Helical" evidence="1">
    <location>
        <begin position="364"/>
        <end position="384"/>
    </location>
</feature>
<comment type="function">
    <text evidence="1">Na(+)/H(+) antiporter that extrudes sodium in exchange for external protons.</text>
</comment>
<comment type="catalytic activity">
    <reaction evidence="1">
        <text>Na(+)(in) + 2 H(+)(out) = Na(+)(out) + 2 H(+)(in)</text>
        <dbReference type="Rhea" id="RHEA:29251"/>
        <dbReference type="ChEBI" id="CHEBI:15378"/>
        <dbReference type="ChEBI" id="CHEBI:29101"/>
    </reaction>
    <physiologicalReaction direction="left-to-right" evidence="1">
        <dbReference type="Rhea" id="RHEA:29252"/>
    </physiologicalReaction>
</comment>
<comment type="subcellular location">
    <subcellularLocation>
        <location evidence="1">Cell inner membrane</location>
        <topology evidence="1">Multi-pass membrane protein</topology>
    </subcellularLocation>
</comment>
<comment type="similarity">
    <text evidence="1">Belongs to the NhaA Na(+)/H(+) (TC 2.A.33) antiporter family.</text>
</comment>
<keyword id="KW-0050">Antiport</keyword>
<keyword id="KW-0997">Cell inner membrane</keyword>
<keyword id="KW-1003">Cell membrane</keyword>
<keyword id="KW-0406">Ion transport</keyword>
<keyword id="KW-0472">Membrane</keyword>
<keyword id="KW-1185">Reference proteome</keyword>
<keyword id="KW-0915">Sodium</keyword>
<keyword id="KW-0739">Sodium transport</keyword>
<keyword id="KW-0812">Transmembrane</keyword>
<keyword id="KW-1133">Transmembrane helix</keyword>
<keyword id="KW-0813">Transport</keyword>
<accession>Q9AAZ2</accession>
<dbReference type="EMBL" id="AE005673">
    <property type="protein sequence ID" value="AAK22437.1"/>
    <property type="molecule type" value="Genomic_DNA"/>
</dbReference>
<dbReference type="PIR" id="A87305">
    <property type="entry name" value="A87305"/>
</dbReference>
<dbReference type="RefSeq" id="NP_419269.1">
    <property type="nucleotide sequence ID" value="NC_002696.2"/>
</dbReference>
<dbReference type="RefSeq" id="WP_010918338.1">
    <property type="nucleotide sequence ID" value="NC_002696.2"/>
</dbReference>
<dbReference type="SMR" id="Q9AAZ2"/>
<dbReference type="STRING" id="190650.CC_0450"/>
<dbReference type="EnsemblBacteria" id="AAK22437">
    <property type="protein sequence ID" value="AAK22437"/>
    <property type="gene ID" value="CC_0450"/>
</dbReference>
<dbReference type="KEGG" id="ccr:CC_0450"/>
<dbReference type="PATRIC" id="fig|190650.5.peg.456"/>
<dbReference type="eggNOG" id="COG3004">
    <property type="taxonomic scope" value="Bacteria"/>
</dbReference>
<dbReference type="HOGENOM" id="CLU_015803_1_2_5"/>
<dbReference type="BioCyc" id="CAULO:CC0450-MONOMER"/>
<dbReference type="Proteomes" id="UP000001816">
    <property type="component" value="Chromosome"/>
</dbReference>
<dbReference type="GO" id="GO:0005886">
    <property type="term" value="C:plasma membrane"/>
    <property type="evidence" value="ECO:0007669"/>
    <property type="project" value="UniProtKB-SubCell"/>
</dbReference>
<dbReference type="GO" id="GO:0015385">
    <property type="term" value="F:sodium:proton antiporter activity"/>
    <property type="evidence" value="ECO:0007669"/>
    <property type="project" value="TreeGrafter"/>
</dbReference>
<dbReference type="GO" id="GO:0006885">
    <property type="term" value="P:regulation of pH"/>
    <property type="evidence" value="ECO:0007669"/>
    <property type="project" value="InterPro"/>
</dbReference>
<dbReference type="Gene3D" id="1.20.1530.10">
    <property type="entry name" value="Na+/H+ antiporter like domain"/>
    <property type="match status" value="1"/>
</dbReference>
<dbReference type="HAMAP" id="MF_01844">
    <property type="entry name" value="NhaA"/>
    <property type="match status" value="1"/>
</dbReference>
<dbReference type="InterPro" id="IPR023171">
    <property type="entry name" value="Na/H_antiporter_dom_sf"/>
</dbReference>
<dbReference type="InterPro" id="IPR004670">
    <property type="entry name" value="NhaA"/>
</dbReference>
<dbReference type="NCBIfam" id="TIGR00773">
    <property type="entry name" value="NhaA"/>
    <property type="match status" value="1"/>
</dbReference>
<dbReference type="NCBIfam" id="NF007111">
    <property type="entry name" value="PRK09560.1"/>
    <property type="match status" value="1"/>
</dbReference>
<dbReference type="NCBIfam" id="NF007112">
    <property type="entry name" value="PRK09561.1"/>
    <property type="match status" value="1"/>
</dbReference>
<dbReference type="PANTHER" id="PTHR30341:SF0">
    <property type="entry name" value="NA(+)_H(+) ANTIPORTER NHAA"/>
    <property type="match status" value="1"/>
</dbReference>
<dbReference type="PANTHER" id="PTHR30341">
    <property type="entry name" value="SODIUM ION/PROTON ANTIPORTER NHAA-RELATED"/>
    <property type="match status" value="1"/>
</dbReference>
<dbReference type="Pfam" id="PF06965">
    <property type="entry name" value="Na_H_antiport_1"/>
    <property type="match status" value="1"/>
</dbReference>
<evidence type="ECO:0000255" key="1">
    <source>
        <dbReference type="HAMAP-Rule" id="MF_01844"/>
    </source>
</evidence>